<sequence length="31" mass="3341">SISCGESCAMISFCFTEVIGCSCKNKVCYLN</sequence>
<keyword id="KW-0002">3D-structure</keyword>
<keyword id="KW-0051">Antiviral defense</keyword>
<keyword id="KW-0903">Direct protein sequencing</keyword>
<keyword id="KW-1015">Disulfide bond</keyword>
<keyword id="KW-0960">Knottin</keyword>
<keyword id="KW-0611">Plant defense</keyword>
<comment type="function">
    <text evidence="2 3">Probably participates in a plant defense mechanism. Has anti-human immunodeficiency virus activity.</text>
</comment>
<comment type="tissue specificity">
    <text evidence="2">Expressed in leaves.</text>
</comment>
<comment type="domain">
    <text>The presence of a 'disulfide through disulfide knot' structurally defines this protein as a knottin.</text>
</comment>
<comment type="PTM">
    <text evidence="2">This is a cyclic peptide.</text>
</comment>
<comment type="mass spectrometry" mass="3330.6" method="Electrospray" evidence="2"/>
<comment type="similarity">
    <text evidence="1">Belongs to the cyclotide family. Bracelet subfamily.</text>
</comment>
<comment type="caution">
    <text evidence="3">This peptide is cyclic. The start position was chosen by similarity to OAK1 (kalata-B1) for which the DNA sequence is known.</text>
</comment>
<feature type="peptide" id="PRO_0000044702" description="Leaf cyclotide 1" evidence="2">
    <location>
        <begin position="1"/>
        <end position="31"/>
    </location>
</feature>
<feature type="disulfide bond" evidence="2">
    <location>
        <begin position="4"/>
        <end position="21"/>
    </location>
</feature>
<feature type="disulfide bond" evidence="2">
    <location>
        <begin position="8"/>
        <end position="23"/>
    </location>
</feature>
<feature type="disulfide bond" evidence="2">
    <location>
        <begin position="14"/>
        <end position="28"/>
    </location>
</feature>
<feature type="cross-link" description="Cyclopeptide (Ser-Asn)" evidence="2">
    <location>
        <begin position="1"/>
        <end position="31"/>
    </location>
</feature>
<feature type="strand" evidence="4">
    <location>
        <begin position="9"/>
        <end position="12"/>
    </location>
</feature>
<feature type="helix" evidence="4">
    <location>
        <begin position="15"/>
        <end position="17"/>
    </location>
</feature>
<feature type="turn" evidence="4">
    <location>
        <begin position="18"/>
        <end position="20"/>
    </location>
</feature>
<feature type="strand" evidence="4">
    <location>
        <begin position="22"/>
        <end position="24"/>
    </location>
</feature>
<feature type="strand" evidence="4">
    <location>
        <begin position="27"/>
        <end position="30"/>
    </location>
</feature>
<reference evidence="3" key="1">
    <citation type="journal article" date="2005" name="J. Biol. Chem.">
        <title>Isolation and characterization of novel cyclotides from Viola hederaceae: solution structure and anti-HIV activity of vhl-1, a leaf-specific expressed cyclotide.</title>
        <authorList>
            <person name="Chen B."/>
            <person name="Colgrave M.L."/>
            <person name="Daly N.L."/>
            <person name="Rosengren K.J."/>
            <person name="Gustafson K.R."/>
            <person name="Craik D.J."/>
        </authorList>
    </citation>
    <scope>PROTEIN SEQUENCE</scope>
    <scope>FUNCTION</scope>
    <scope>TISSUE SPECIFICITY</scope>
    <scope>MASS SPECTROMETRY</scope>
    <scope>STRUCTURE BY NMR</scope>
    <scope>DISULFIDE BONDS</scope>
</reference>
<name>VHL1_VIOHE</name>
<proteinExistence type="evidence at protein level"/>
<accession>P84522</accession>
<evidence type="ECO:0000255" key="1"/>
<evidence type="ECO:0000269" key="2">
    <source>
    </source>
</evidence>
<evidence type="ECO:0000305" key="3"/>
<evidence type="ECO:0007829" key="4">
    <source>
        <dbReference type="PDB" id="1ZA8"/>
    </source>
</evidence>
<organism>
    <name type="scientific">Viola hederacea</name>
    <name type="common">Australian violet</name>
    <dbReference type="NCBI Taxonomy" id="180952"/>
    <lineage>
        <taxon>Eukaryota</taxon>
        <taxon>Viridiplantae</taxon>
        <taxon>Streptophyta</taxon>
        <taxon>Embryophyta</taxon>
        <taxon>Tracheophyta</taxon>
        <taxon>Spermatophyta</taxon>
        <taxon>Magnoliopsida</taxon>
        <taxon>eudicotyledons</taxon>
        <taxon>Gunneridae</taxon>
        <taxon>Pentapetalae</taxon>
        <taxon>rosids</taxon>
        <taxon>fabids</taxon>
        <taxon>Malpighiales</taxon>
        <taxon>Violaceae</taxon>
        <taxon>Viola</taxon>
        <taxon>Viola subgen. Viola</taxon>
        <taxon>Viola sect. Erpetion</taxon>
    </lineage>
</organism>
<protein>
    <recommendedName>
        <fullName>Leaf cyclotide 1</fullName>
    </recommendedName>
    <alternativeName>
        <fullName>Vhl-1</fullName>
    </alternativeName>
</protein>
<dbReference type="PDB" id="1ZA8">
    <property type="method" value="NMR"/>
    <property type="chains" value="A=4-31"/>
</dbReference>
<dbReference type="PDBsum" id="1ZA8"/>
<dbReference type="SMR" id="P84522"/>
<dbReference type="EvolutionaryTrace" id="P84522"/>
<dbReference type="GO" id="GO:0051607">
    <property type="term" value="P:defense response to virus"/>
    <property type="evidence" value="ECO:0007669"/>
    <property type="project" value="UniProtKB-KW"/>
</dbReference>
<dbReference type="InterPro" id="IPR005535">
    <property type="entry name" value="Cyclotide"/>
</dbReference>
<dbReference type="InterPro" id="IPR012323">
    <property type="entry name" value="Cyclotide_bracelet_CS"/>
</dbReference>
<dbReference type="InterPro" id="IPR036146">
    <property type="entry name" value="Cyclotide_sf"/>
</dbReference>
<dbReference type="Pfam" id="PF03784">
    <property type="entry name" value="Cyclotide"/>
    <property type="match status" value="1"/>
</dbReference>
<dbReference type="PIRSF" id="PIRSF037891">
    <property type="entry name" value="Cycloviolacin"/>
    <property type="match status" value="1"/>
</dbReference>
<dbReference type="SUPFAM" id="SSF57038">
    <property type="entry name" value="Cyclotides"/>
    <property type="match status" value="1"/>
</dbReference>
<dbReference type="PROSITE" id="PS60008">
    <property type="entry name" value="CYCLOTIDE_BRACELET"/>
    <property type="match status" value="1"/>
</dbReference>